<evidence type="ECO:0000255" key="1"/>
<evidence type="ECO:0000269" key="2">
    <source>
    </source>
</evidence>
<evidence type="ECO:0000303" key="3">
    <source>
    </source>
</evidence>
<evidence type="ECO:0000305" key="4"/>
<accession>P85157</accession>
<keyword id="KW-0903">Direct protein sequencing</keyword>
<keyword id="KW-0378">Hydrolase</keyword>
<keyword id="KW-0645">Protease</keyword>
<keyword id="KW-0655">Prothrombin activator</keyword>
<keyword id="KW-0720">Serine protease</keyword>
<sequence length="18" mass="1914">AYVSQSGAPWGLGRISHK</sequence>
<organism>
    <name type="scientific">Acremonium sp</name>
    <dbReference type="NCBI Taxonomy" id="2046025"/>
    <lineage>
        <taxon>Eukaryota</taxon>
        <taxon>Fungi</taxon>
        <taxon>Dikarya</taxon>
        <taxon>Ascomycota</taxon>
        <taxon>Pezizomycotina</taxon>
        <taxon>Sordariomycetes</taxon>
        <taxon>Hypocreomycetidae</taxon>
        <taxon>Hypocreales</taxon>
        <taxon>Hypocreales incertae sedis</taxon>
        <taxon>Acremonium</taxon>
    </lineage>
</organism>
<feature type="chain" id="PRO_0000291533" description="Subtilisin-like serine protease AS-E2">
    <location>
        <begin position="1"/>
        <end position="18" status="greater than"/>
    </location>
</feature>
<feature type="non-terminal residue" evidence="3">
    <location>
        <position position="18"/>
    </location>
</feature>
<name>ASE2_ACRSP</name>
<reference evidence="4" key="1">
    <citation type="journal article" date="2007" name="Biochem. Biophys. Res. Commun.">
        <title>Activation of prothrombin by two subtilisin-like serine proteases from Acremonium sp.</title>
        <authorList>
            <person name="Liu C."/>
            <person name="Matsushita Y."/>
            <person name="Shimizu K."/>
            <person name="Makimura K."/>
            <person name="Hasumi K."/>
        </authorList>
    </citation>
    <scope>PROTEIN SEQUENCE</scope>
    <scope>FUNCTION</scope>
    <scope>ACTIVITY REGULATION</scope>
    <scope>BIOPHYSICOCHEMICAL PROPERTIES</scope>
    <scope>SUBUNIT</scope>
    <source>
        <strain evidence="2">F11177</strain>
    </source>
</reference>
<dbReference type="EC" id="3.4.21.-"/>
<dbReference type="GO" id="GO:0016504">
    <property type="term" value="F:peptidase activator activity"/>
    <property type="evidence" value="ECO:0007669"/>
    <property type="project" value="UniProtKB-KW"/>
</dbReference>
<dbReference type="GO" id="GO:0008236">
    <property type="term" value="F:serine-type peptidase activity"/>
    <property type="evidence" value="ECO:0007669"/>
    <property type="project" value="UniProtKB-KW"/>
</dbReference>
<dbReference type="GO" id="GO:0006508">
    <property type="term" value="P:proteolysis"/>
    <property type="evidence" value="ECO:0007669"/>
    <property type="project" value="UniProtKB-KW"/>
</dbReference>
<protein>
    <recommendedName>
        <fullName>Subtilisin-like serine protease AS-E2</fullName>
        <ecNumber>3.4.21.-</ecNumber>
    </recommendedName>
</protein>
<proteinExistence type="evidence at protein level"/>
<comment type="function">
    <text evidence="2">Subtilisin-like serine protease. Cleaves prothrombin at 151-Ala-|-Met-152, 271-Arg-|-Thr-272 and 316-Tyr-|-Ile-317 to produce meizothrombin(desF1)-like molecules. Degrades fibrinogen. Inhibits plasma coagulation.</text>
</comment>
<comment type="activity regulation">
    <text evidence="2">Strongly inhibited by antipain, PMSF and aprotinin. Inhibited by benzamidine by 49%. Little or no inhibition by EDTA, E-64, iodoacetic acid, leupeptin and FUT-175.</text>
</comment>
<comment type="biophysicochemical properties">
    <phDependence>
        <text evidence="2">Optimum pH is 8.0.</text>
    </phDependence>
    <temperatureDependence>
        <text evidence="2">Optimum temperature is 55 degrees Celsius.</text>
    </temperatureDependence>
</comment>
<comment type="subunit">
    <text evidence="2">Homodimer or multimer.</text>
</comment>
<comment type="similarity">
    <text evidence="1">Belongs to the peptidase S8 family.</text>
</comment>